<sequence>MTTRVVLGSASSGRLKVLRQAGIEPLVVVSGVDEDAIVAALGAAAPPDQVVCALAAAKAASVVESLPTEVATDCVVIGCDSMLQLDGRLTGKPGTPAAARAQWQQMAGRSGELYTGHCLVRVRDGVAGRREVEAAATTVRFGTPPPADLAAYVDSGEPLGVAGAFTLDGLGGWFLDGVDGDPSNVIGLSLPLVRRMLDRLDLSVPALWTR</sequence>
<proteinExistence type="inferred from homology"/>
<reference key="1">
    <citation type="submission" date="2007-02" db="EMBL/GenBank/DDBJ databases">
        <title>Complete sequence of Mycobacterium sp. JLS.</title>
        <authorList>
            <consortium name="US DOE Joint Genome Institute"/>
            <person name="Copeland A."/>
            <person name="Lucas S."/>
            <person name="Lapidus A."/>
            <person name="Barry K."/>
            <person name="Detter J.C."/>
            <person name="Glavina del Rio T."/>
            <person name="Hammon N."/>
            <person name="Israni S."/>
            <person name="Dalin E."/>
            <person name="Tice H."/>
            <person name="Pitluck S."/>
            <person name="Chain P."/>
            <person name="Malfatti S."/>
            <person name="Shin M."/>
            <person name="Vergez L."/>
            <person name="Schmutz J."/>
            <person name="Larimer F."/>
            <person name="Land M."/>
            <person name="Hauser L."/>
            <person name="Kyrpides N."/>
            <person name="Mikhailova N."/>
            <person name="Miller C.D."/>
            <person name="Anderson A.J."/>
            <person name="Sims R.C."/>
            <person name="Richardson P."/>
        </authorList>
    </citation>
    <scope>NUCLEOTIDE SEQUENCE [LARGE SCALE GENOMIC DNA]</scope>
    <source>
        <strain>JLS</strain>
    </source>
</reference>
<keyword id="KW-0963">Cytoplasm</keyword>
<keyword id="KW-0378">Hydrolase</keyword>
<keyword id="KW-0546">Nucleotide metabolism</keyword>
<protein>
    <recommendedName>
        <fullName evidence="1">Nucleoside triphosphate pyrophosphatase</fullName>
        <ecNumber evidence="1">3.6.1.9</ecNumber>
    </recommendedName>
    <alternativeName>
        <fullName evidence="1">Nucleotide pyrophosphatase</fullName>
        <shortName evidence="1">Nucleotide PPase</shortName>
    </alternativeName>
</protein>
<accession>A3PW53</accession>
<feature type="chain" id="PRO_1000060947" description="Nucleoside triphosphate pyrophosphatase">
    <location>
        <begin position="1"/>
        <end position="210"/>
    </location>
</feature>
<feature type="active site" description="Proton acceptor" evidence="1">
    <location>
        <position position="80"/>
    </location>
</feature>
<dbReference type="EC" id="3.6.1.9" evidence="1"/>
<dbReference type="EMBL" id="CP000580">
    <property type="protein sequence ID" value="ABN97130.1"/>
    <property type="molecule type" value="Genomic_DNA"/>
</dbReference>
<dbReference type="SMR" id="A3PW53"/>
<dbReference type="KEGG" id="mjl:Mjls_1328"/>
<dbReference type="HOGENOM" id="CLU_040416_1_2_11"/>
<dbReference type="BioCyc" id="MSP164757:G1G8C-1341-MONOMER"/>
<dbReference type="GO" id="GO:0005737">
    <property type="term" value="C:cytoplasm"/>
    <property type="evidence" value="ECO:0007669"/>
    <property type="project" value="UniProtKB-SubCell"/>
</dbReference>
<dbReference type="GO" id="GO:0047429">
    <property type="term" value="F:nucleoside triphosphate diphosphatase activity"/>
    <property type="evidence" value="ECO:0007669"/>
    <property type="project" value="UniProtKB-EC"/>
</dbReference>
<dbReference type="GO" id="GO:0009117">
    <property type="term" value="P:nucleotide metabolic process"/>
    <property type="evidence" value="ECO:0007669"/>
    <property type="project" value="UniProtKB-KW"/>
</dbReference>
<dbReference type="CDD" id="cd00555">
    <property type="entry name" value="Maf"/>
    <property type="match status" value="1"/>
</dbReference>
<dbReference type="Gene3D" id="3.90.950.10">
    <property type="match status" value="1"/>
</dbReference>
<dbReference type="HAMAP" id="MF_00528">
    <property type="entry name" value="Maf"/>
    <property type="match status" value="1"/>
</dbReference>
<dbReference type="InterPro" id="IPR029001">
    <property type="entry name" value="ITPase-like_fam"/>
</dbReference>
<dbReference type="InterPro" id="IPR003697">
    <property type="entry name" value="Maf-like"/>
</dbReference>
<dbReference type="NCBIfam" id="TIGR00172">
    <property type="entry name" value="maf"/>
    <property type="match status" value="1"/>
</dbReference>
<dbReference type="PANTHER" id="PTHR43213">
    <property type="entry name" value="BIFUNCTIONAL DTTP/UTP PYROPHOSPHATASE/METHYLTRANSFERASE PROTEIN-RELATED"/>
    <property type="match status" value="1"/>
</dbReference>
<dbReference type="PANTHER" id="PTHR43213:SF5">
    <property type="entry name" value="BIFUNCTIONAL DTTP_UTP PYROPHOSPHATASE_METHYLTRANSFERASE PROTEIN-RELATED"/>
    <property type="match status" value="1"/>
</dbReference>
<dbReference type="Pfam" id="PF02545">
    <property type="entry name" value="Maf"/>
    <property type="match status" value="1"/>
</dbReference>
<dbReference type="PIRSF" id="PIRSF006305">
    <property type="entry name" value="Maf"/>
    <property type="match status" value="1"/>
</dbReference>
<dbReference type="SUPFAM" id="SSF52972">
    <property type="entry name" value="ITPase-like"/>
    <property type="match status" value="1"/>
</dbReference>
<evidence type="ECO:0000255" key="1">
    <source>
        <dbReference type="HAMAP-Rule" id="MF_00528"/>
    </source>
</evidence>
<comment type="function">
    <text evidence="1">Nucleoside triphosphate pyrophosphatase. May have a dual role in cell division arrest and in preventing the incorporation of modified nucleotides into cellular nucleic acids.</text>
</comment>
<comment type="catalytic activity">
    <reaction evidence="1">
        <text>a ribonucleoside 5'-triphosphate + H2O = a ribonucleoside 5'-phosphate + diphosphate + H(+)</text>
        <dbReference type="Rhea" id="RHEA:23996"/>
        <dbReference type="ChEBI" id="CHEBI:15377"/>
        <dbReference type="ChEBI" id="CHEBI:15378"/>
        <dbReference type="ChEBI" id="CHEBI:33019"/>
        <dbReference type="ChEBI" id="CHEBI:58043"/>
        <dbReference type="ChEBI" id="CHEBI:61557"/>
        <dbReference type="EC" id="3.6.1.9"/>
    </reaction>
</comment>
<comment type="catalytic activity">
    <reaction evidence="1">
        <text>a 2'-deoxyribonucleoside 5'-triphosphate + H2O = a 2'-deoxyribonucleoside 5'-phosphate + diphosphate + H(+)</text>
        <dbReference type="Rhea" id="RHEA:44644"/>
        <dbReference type="ChEBI" id="CHEBI:15377"/>
        <dbReference type="ChEBI" id="CHEBI:15378"/>
        <dbReference type="ChEBI" id="CHEBI:33019"/>
        <dbReference type="ChEBI" id="CHEBI:61560"/>
        <dbReference type="ChEBI" id="CHEBI:65317"/>
        <dbReference type="EC" id="3.6.1.9"/>
    </reaction>
</comment>
<comment type="cofactor">
    <cofactor evidence="1">
        <name>a divalent metal cation</name>
        <dbReference type="ChEBI" id="CHEBI:60240"/>
    </cofactor>
</comment>
<comment type="subcellular location">
    <subcellularLocation>
        <location evidence="1">Cytoplasm</location>
    </subcellularLocation>
</comment>
<comment type="similarity">
    <text evidence="1">Belongs to the Maf family.</text>
</comment>
<name>NTPP_MYCSJ</name>
<gene>
    <name type="ordered locus">Mjls_1328</name>
</gene>
<organism>
    <name type="scientific">Mycobacterium sp. (strain JLS)</name>
    <dbReference type="NCBI Taxonomy" id="164757"/>
    <lineage>
        <taxon>Bacteria</taxon>
        <taxon>Bacillati</taxon>
        <taxon>Actinomycetota</taxon>
        <taxon>Actinomycetes</taxon>
        <taxon>Mycobacteriales</taxon>
        <taxon>Mycobacteriaceae</taxon>
        <taxon>Mycobacterium</taxon>
    </lineage>
</organism>